<keyword id="KW-0002">3D-structure</keyword>
<keyword id="KW-0025">Alternative splicing</keyword>
<keyword id="KW-0539">Nucleus</keyword>
<keyword id="KW-1185">Reference proteome</keyword>
<keyword id="KW-0677">Repeat</keyword>
<keyword id="KW-0694">RNA-binding</keyword>
<keyword id="KW-0943">RNA-mediated gene silencing</keyword>
<name>DRB1_ARATH</name>
<evidence type="ECO:0000255" key="1">
    <source>
        <dbReference type="PROSITE-ProRule" id="PRU00266"/>
    </source>
</evidence>
<evidence type="ECO:0000269" key="2">
    <source>
    </source>
</evidence>
<evidence type="ECO:0000269" key="3">
    <source>
    </source>
</evidence>
<evidence type="ECO:0000269" key="4">
    <source>
    </source>
</evidence>
<evidence type="ECO:0000269" key="5">
    <source>
    </source>
</evidence>
<evidence type="ECO:0000269" key="6">
    <source>
    </source>
</evidence>
<evidence type="ECO:0000269" key="7">
    <source>
    </source>
</evidence>
<evidence type="ECO:0000269" key="8">
    <source>
    </source>
</evidence>
<evidence type="ECO:0000269" key="9">
    <source>
    </source>
</evidence>
<evidence type="ECO:0000269" key="10">
    <source>
    </source>
</evidence>
<evidence type="ECO:0000269" key="11">
    <source>
    </source>
</evidence>
<evidence type="ECO:0000269" key="12">
    <source>
    </source>
</evidence>
<evidence type="ECO:0000269" key="13">
    <source>
    </source>
</evidence>
<evidence type="ECO:0000269" key="14">
    <source>
    </source>
</evidence>
<evidence type="ECO:0000269" key="15">
    <source>
    </source>
</evidence>
<evidence type="ECO:0000303" key="16">
    <source>
    </source>
</evidence>
<evidence type="ECO:0007829" key="17">
    <source>
        <dbReference type="PDB" id="2L2N"/>
    </source>
</evidence>
<evidence type="ECO:0007829" key="18">
    <source>
        <dbReference type="PDB" id="3ADG"/>
    </source>
</evidence>
<evidence type="ECO:0007829" key="19">
    <source>
        <dbReference type="PDB" id="3ADJ"/>
    </source>
</evidence>
<accession>O04492</accession>
<accession>C0Z3F9</accession>
<dbReference type="EMBL" id="AF276440">
    <property type="protein sequence ID" value="AAG49890.1"/>
    <property type="molecule type" value="mRNA"/>
</dbReference>
<dbReference type="EMBL" id="AC000132">
    <property type="protein sequence ID" value="AAB60726.1"/>
    <property type="molecule type" value="Genomic_DNA"/>
</dbReference>
<dbReference type="EMBL" id="CP002684">
    <property type="protein sequence ID" value="AEE28481.1"/>
    <property type="molecule type" value="Genomic_DNA"/>
</dbReference>
<dbReference type="EMBL" id="AY054631">
    <property type="protein sequence ID" value="AAK96822.1"/>
    <property type="molecule type" value="mRNA"/>
</dbReference>
<dbReference type="EMBL" id="AY081525">
    <property type="protein sequence ID" value="AAM10087.1"/>
    <property type="molecule type" value="mRNA"/>
</dbReference>
<dbReference type="EMBL" id="AK319123">
    <property type="protein sequence ID" value="BAH57238.1"/>
    <property type="molecule type" value="mRNA"/>
</dbReference>
<dbReference type="PIR" id="H86230">
    <property type="entry name" value="H86230"/>
</dbReference>
<dbReference type="RefSeq" id="NP_563850.1">
    <molecule id="O04492-1"/>
    <property type="nucleotide sequence ID" value="NM_100842.4"/>
</dbReference>
<dbReference type="PDB" id="2L2M">
    <property type="method" value="NMR"/>
    <property type="chains" value="A=97-170"/>
</dbReference>
<dbReference type="PDB" id="2L2N">
    <property type="method" value="NMR"/>
    <property type="chains" value="A=1-100"/>
</dbReference>
<dbReference type="PDB" id="3ADG">
    <property type="method" value="X-ray"/>
    <property type="resolution" value="1.70 A"/>
    <property type="chains" value="A=15-84"/>
</dbReference>
<dbReference type="PDB" id="3ADI">
    <property type="method" value="X-ray"/>
    <property type="resolution" value="3.20 A"/>
    <property type="chains" value="A/B/C=15-84"/>
</dbReference>
<dbReference type="PDB" id="3ADJ">
    <property type="method" value="X-ray"/>
    <property type="resolution" value="3.00 A"/>
    <property type="chains" value="A=100-172"/>
</dbReference>
<dbReference type="PDBsum" id="2L2M"/>
<dbReference type="PDBsum" id="2L2N"/>
<dbReference type="PDBsum" id="3ADG"/>
<dbReference type="PDBsum" id="3ADI"/>
<dbReference type="PDBsum" id="3ADJ"/>
<dbReference type="BMRB" id="O04492"/>
<dbReference type="SMR" id="O04492"/>
<dbReference type="BioGRID" id="22739">
    <property type="interactions" value="23"/>
</dbReference>
<dbReference type="DIP" id="DIP-33453N"/>
<dbReference type="FunCoup" id="O04492">
    <property type="interactions" value="688"/>
</dbReference>
<dbReference type="IntAct" id="O04492">
    <property type="interactions" value="10"/>
</dbReference>
<dbReference type="STRING" id="3702.O04492"/>
<dbReference type="iPTMnet" id="O04492"/>
<dbReference type="PaxDb" id="3702-AT1G09700.1"/>
<dbReference type="ProteomicsDB" id="241257">
    <molecule id="O04492-1"/>
</dbReference>
<dbReference type="EnsemblPlants" id="AT1G09700.1">
    <molecule id="O04492-1"/>
    <property type="protein sequence ID" value="AT1G09700.1"/>
    <property type="gene ID" value="AT1G09700"/>
</dbReference>
<dbReference type="GeneID" id="837498"/>
<dbReference type="Gramene" id="AT1G09700.1">
    <molecule id="O04492-1"/>
    <property type="protein sequence ID" value="AT1G09700.1"/>
    <property type="gene ID" value="AT1G09700"/>
</dbReference>
<dbReference type="KEGG" id="ath:AT1G09700"/>
<dbReference type="Araport" id="AT1G09700"/>
<dbReference type="TAIR" id="AT1G09700">
    <property type="gene designation" value="HYL1"/>
</dbReference>
<dbReference type="eggNOG" id="ENOG502QV9N">
    <property type="taxonomic scope" value="Eukaryota"/>
</dbReference>
<dbReference type="HOGENOM" id="CLU_054279_0_0_1"/>
<dbReference type="InParanoid" id="O04492"/>
<dbReference type="CD-CODE" id="52A3D75E">
    <property type="entry name" value="Pericentriolar compartment"/>
</dbReference>
<dbReference type="CD-CODE" id="E1C65F8A">
    <property type="entry name" value="Nuclear dicing body"/>
</dbReference>
<dbReference type="EvolutionaryTrace" id="O04492"/>
<dbReference type="PRO" id="PR:O04492"/>
<dbReference type="Proteomes" id="UP000006548">
    <property type="component" value="Chromosome 1"/>
</dbReference>
<dbReference type="ExpressionAtlas" id="O04492">
    <property type="expression patterns" value="baseline and differential"/>
</dbReference>
<dbReference type="GO" id="GO:0010445">
    <property type="term" value="C:nuclear dicing body"/>
    <property type="evidence" value="ECO:0000314"/>
    <property type="project" value="TAIR"/>
</dbReference>
<dbReference type="GO" id="GO:0016607">
    <property type="term" value="C:nuclear speck"/>
    <property type="evidence" value="ECO:0007669"/>
    <property type="project" value="UniProtKB-SubCell"/>
</dbReference>
<dbReference type="GO" id="GO:0005634">
    <property type="term" value="C:nucleus"/>
    <property type="evidence" value="ECO:0000314"/>
    <property type="project" value="TAIR"/>
</dbReference>
<dbReference type="GO" id="GO:0003725">
    <property type="term" value="F:double-stranded RNA binding"/>
    <property type="evidence" value="ECO:0000314"/>
    <property type="project" value="TAIR"/>
</dbReference>
<dbReference type="GO" id="GO:0042802">
    <property type="term" value="F:identical protein binding"/>
    <property type="evidence" value="ECO:0000353"/>
    <property type="project" value="IntAct"/>
</dbReference>
<dbReference type="GO" id="GO:0035198">
    <property type="term" value="F:miRNA binding"/>
    <property type="evidence" value="ECO:0000314"/>
    <property type="project" value="TAIR"/>
</dbReference>
<dbReference type="GO" id="GO:0010589">
    <property type="term" value="P:leaf proximal/distal pattern formation"/>
    <property type="evidence" value="ECO:0000315"/>
    <property type="project" value="TAIR"/>
</dbReference>
<dbReference type="GO" id="GO:0010305">
    <property type="term" value="P:leaf vascular tissue pattern formation"/>
    <property type="evidence" value="ECO:0000315"/>
    <property type="project" value="TAIR"/>
</dbReference>
<dbReference type="GO" id="GO:0035196">
    <property type="term" value="P:miRNA processing"/>
    <property type="evidence" value="ECO:0000315"/>
    <property type="project" value="TAIR"/>
</dbReference>
<dbReference type="GO" id="GO:0035279">
    <property type="term" value="P:miRNA-mediated gene silencing by mRNA destabilization"/>
    <property type="evidence" value="ECO:0000315"/>
    <property type="project" value="TAIR"/>
</dbReference>
<dbReference type="GO" id="GO:0031054">
    <property type="term" value="P:pre-miRNA processing"/>
    <property type="evidence" value="ECO:0000315"/>
    <property type="project" value="UniProtKB"/>
</dbReference>
<dbReference type="GO" id="GO:0009737">
    <property type="term" value="P:response to abscisic acid"/>
    <property type="evidence" value="ECO:0000315"/>
    <property type="project" value="TAIR"/>
</dbReference>
<dbReference type="GO" id="GO:0009733">
    <property type="term" value="P:response to auxin"/>
    <property type="evidence" value="ECO:0000315"/>
    <property type="project" value="TAIR"/>
</dbReference>
<dbReference type="GO" id="GO:0009735">
    <property type="term" value="P:response to cytokinin"/>
    <property type="evidence" value="ECO:0000315"/>
    <property type="project" value="TAIR"/>
</dbReference>
<dbReference type="GO" id="GO:0010267">
    <property type="term" value="P:ta-siRNA processing"/>
    <property type="evidence" value="ECO:0000315"/>
    <property type="project" value="TAIR"/>
</dbReference>
<dbReference type="CDD" id="cd19907">
    <property type="entry name" value="DSRM_AtDRB-like_rpt1"/>
    <property type="match status" value="1"/>
</dbReference>
<dbReference type="CDD" id="cd19908">
    <property type="entry name" value="DSRM_AtDRB-like_rpt2"/>
    <property type="match status" value="1"/>
</dbReference>
<dbReference type="FunFam" id="3.30.160.20:FF:000048">
    <property type="entry name" value="Double-stranded RNA-binding protein 1"/>
    <property type="match status" value="1"/>
</dbReference>
<dbReference type="Gene3D" id="3.30.160.20">
    <property type="match status" value="2"/>
</dbReference>
<dbReference type="InterPro" id="IPR044450">
    <property type="entry name" value="AtDRB-like_DSRM_1"/>
</dbReference>
<dbReference type="InterPro" id="IPR044451">
    <property type="entry name" value="AtDRB-like_DSRM_2"/>
</dbReference>
<dbReference type="InterPro" id="IPR014720">
    <property type="entry name" value="dsRBD_dom"/>
</dbReference>
<dbReference type="PANTHER" id="PTHR11207:SF1">
    <property type="entry name" value="DOUBLE-STRANDED RNA-BINDING PROTEIN 1"/>
    <property type="match status" value="1"/>
</dbReference>
<dbReference type="PANTHER" id="PTHR11207">
    <property type="entry name" value="RIBONUCLEASE III"/>
    <property type="match status" value="1"/>
</dbReference>
<dbReference type="Pfam" id="PF00035">
    <property type="entry name" value="dsrm"/>
    <property type="match status" value="2"/>
</dbReference>
<dbReference type="SMART" id="SM00358">
    <property type="entry name" value="DSRM"/>
    <property type="match status" value="2"/>
</dbReference>
<dbReference type="SUPFAM" id="SSF54768">
    <property type="entry name" value="dsRNA-binding domain-like"/>
    <property type="match status" value="2"/>
</dbReference>
<dbReference type="PROSITE" id="PS50137">
    <property type="entry name" value="DS_RBD"/>
    <property type="match status" value="2"/>
</dbReference>
<feature type="chain" id="PRO_0000404652" description="Double-stranded RNA-binding protein 1">
    <location>
        <begin position="1"/>
        <end position="419"/>
    </location>
</feature>
<feature type="domain" description="DRBM 1" evidence="1">
    <location>
        <begin position="15"/>
        <end position="84"/>
    </location>
</feature>
<feature type="domain" description="DRBM 2" evidence="1">
    <location>
        <begin position="101"/>
        <end position="170"/>
    </location>
</feature>
<feature type="repeat" description="1">
    <location>
        <begin position="247"/>
        <end position="274"/>
    </location>
</feature>
<feature type="repeat" description="2">
    <location>
        <begin position="275"/>
        <end position="302"/>
    </location>
</feature>
<feature type="repeat" description="3">
    <location>
        <begin position="303"/>
        <end position="330"/>
    </location>
</feature>
<feature type="repeat" description="4">
    <location>
        <begin position="331"/>
        <end position="358"/>
    </location>
</feature>
<feature type="repeat" description="5">
    <location>
        <begin position="359"/>
        <end position="386"/>
    </location>
</feature>
<feature type="repeat" description="6">
    <location>
        <begin position="387"/>
        <end position="414"/>
    </location>
</feature>
<feature type="region of interest" description="6 X 28 AA repeats of E-K-I-E-T-T-P-N-L-E-[PS]-[PS]-S-C-M-[NS]-G-L-K-E-A-A-F-G-S-V-E-T">
    <location>
        <begin position="247"/>
        <end position="414"/>
    </location>
</feature>
<feature type="short sequence motif" description="Bipartite nuclear localization">
    <location>
        <begin position="207"/>
        <end position="222"/>
    </location>
</feature>
<feature type="splice variant" id="VSP_040613" description="In isoform 2." evidence="16">
    <location>
        <begin position="72"/>
        <end position="87"/>
    </location>
</feature>
<feature type="helix" evidence="18">
    <location>
        <begin position="16"/>
        <end position="26"/>
    </location>
</feature>
<feature type="strand" evidence="18">
    <location>
        <begin position="33"/>
        <end position="41"/>
    </location>
</feature>
<feature type="strand" evidence="17">
    <location>
        <begin position="42"/>
        <end position="44"/>
    </location>
</feature>
<feature type="strand" evidence="18">
    <location>
        <begin position="46"/>
        <end position="53"/>
    </location>
</feature>
<feature type="strand" evidence="18">
    <location>
        <begin position="56"/>
        <end position="59"/>
    </location>
</feature>
<feature type="strand" evidence="18">
    <location>
        <begin position="64"/>
        <end position="66"/>
    </location>
</feature>
<feature type="helix" evidence="18">
    <location>
        <begin position="67"/>
        <end position="82"/>
    </location>
</feature>
<feature type="helix" evidence="19">
    <location>
        <begin position="100"/>
        <end position="111"/>
    </location>
</feature>
<feature type="turn" evidence="19">
    <location>
        <begin position="112"/>
        <end position="114"/>
    </location>
</feature>
<feature type="strand" evidence="19">
    <location>
        <begin position="119"/>
        <end position="126"/>
    </location>
</feature>
<feature type="strand" evidence="19">
    <location>
        <begin position="128"/>
        <end position="130"/>
    </location>
</feature>
<feature type="strand" evidence="19">
    <location>
        <begin position="132"/>
        <end position="140"/>
    </location>
</feature>
<feature type="strand" evidence="19">
    <location>
        <begin position="143"/>
        <end position="146"/>
    </location>
</feature>
<feature type="strand" evidence="19">
    <location>
        <begin position="150"/>
        <end position="152"/>
    </location>
</feature>
<feature type="helix" evidence="19">
    <location>
        <begin position="153"/>
        <end position="169"/>
    </location>
</feature>
<protein>
    <recommendedName>
        <fullName>Double-stranded RNA-binding protein 1</fullName>
    </recommendedName>
    <alternativeName>
        <fullName>Protein HYPONASTIC LEAVES 1</fullName>
    </alternativeName>
    <alternativeName>
        <fullName>dsRNA-binding protein 1</fullName>
        <shortName>AtDRB1</shortName>
    </alternativeName>
</protein>
<sequence length="419" mass="45547">MTSTDVSSGVSNCYVFKSRLQEYAQKYKLPTPVYEIVKEGPSHKSLFQSTVILDGVRYNSLPGFFNRKAAEQSAAEVALRELAKSSELSQCVSQPVHETGLCKNLLQEYAQKMNYAIPLYQCQKVETLGRVTQFTCTVEIGGIKYTGAATRTKKDAEISAGRTALLAIQSDTKNNLANYNTQLTVLPCEKKTIQAAIPLKETVKTLKARKAQFKKKAQKGKRTVAKNPEDIIIPPQPTDHCQNDQSEKIETTPNLEPSSCMNGLKEAAFGSVETEKIETTPNLEPPSCMNGLKEAAFGSVETEKIETTPNLEPPSCMNGLKEAAFGSVETEKIETTPNLEPSSCMNGLKEAAFGSVETEKIETTPNLEPPSCMNGLKEAAFGSVETEKIETTPNLESSSCMSGLKEAAFGSVETEASHA</sequence>
<proteinExistence type="evidence at protein level"/>
<reference key="1">
    <citation type="journal article" date="2000" name="Plant Cell">
        <title>A mutation in the Arabidopsis HYL1 gene encoding a dsRNA binding protein affects responses to abscisic acid, auxin, and cytokinin.</title>
        <authorList>
            <person name="Lu C."/>
            <person name="Fedoroff N."/>
        </authorList>
    </citation>
    <scope>NUCLEOTIDE SEQUENCE [MRNA] (ISOFORM 1)</scope>
    <scope>FUNCTION</scope>
    <scope>TISSUE SPECIFICITY</scope>
    <scope>INDUCTION</scope>
    <scope>DISRUPTION PHENOTYPE</scope>
    <source>
        <strain>cv. No-0</strain>
    </source>
</reference>
<reference key="2">
    <citation type="journal article" date="2000" name="Nature">
        <title>Sequence and analysis of chromosome 1 of the plant Arabidopsis thaliana.</title>
        <authorList>
            <person name="Theologis A."/>
            <person name="Ecker J.R."/>
            <person name="Palm C.J."/>
            <person name="Federspiel N.A."/>
            <person name="Kaul S."/>
            <person name="White O."/>
            <person name="Alonso J."/>
            <person name="Altafi H."/>
            <person name="Araujo R."/>
            <person name="Bowman C.L."/>
            <person name="Brooks S.Y."/>
            <person name="Buehler E."/>
            <person name="Chan A."/>
            <person name="Chao Q."/>
            <person name="Chen H."/>
            <person name="Cheuk R.F."/>
            <person name="Chin C.W."/>
            <person name="Chung M.K."/>
            <person name="Conn L."/>
            <person name="Conway A.B."/>
            <person name="Conway A.R."/>
            <person name="Creasy T.H."/>
            <person name="Dewar K."/>
            <person name="Dunn P."/>
            <person name="Etgu P."/>
            <person name="Feldblyum T.V."/>
            <person name="Feng J.-D."/>
            <person name="Fong B."/>
            <person name="Fujii C.Y."/>
            <person name="Gill J.E."/>
            <person name="Goldsmith A.D."/>
            <person name="Haas B."/>
            <person name="Hansen N.F."/>
            <person name="Hughes B."/>
            <person name="Huizar L."/>
            <person name="Hunter J.L."/>
            <person name="Jenkins J."/>
            <person name="Johnson-Hopson C."/>
            <person name="Khan S."/>
            <person name="Khaykin E."/>
            <person name="Kim C.J."/>
            <person name="Koo H.L."/>
            <person name="Kremenetskaia I."/>
            <person name="Kurtz D.B."/>
            <person name="Kwan A."/>
            <person name="Lam B."/>
            <person name="Langin-Hooper S."/>
            <person name="Lee A."/>
            <person name="Lee J.M."/>
            <person name="Lenz C.A."/>
            <person name="Li J.H."/>
            <person name="Li Y.-P."/>
            <person name="Lin X."/>
            <person name="Liu S.X."/>
            <person name="Liu Z.A."/>
            <person name="Luros J.S."/>
            <person name="Maiti R."/>
            <person name="Marziali A."/>
            <person name="Militscher J."/>
            <person name="Miranda M."/>
            <person name="Nguyen M."/>
            <person name="Nierman W.C."/>
            <person name="Osborne B.I."/>
            <person name="Pai G."/>
            <person name="Peterson J."/>
            <person name="Pham P.K."/>
            <person name="Rizzo M."/>
            <person name="Rooney T."/>
            <person name="Rowley D."/>
            <person name="Sakano H."/>
            <person name="Salzberg S.L."/>
            <person name="Schwartz J.R."/>
            <person name="Shinn P."/>
            <person name="Southwick A.M."/>
            <person name="Sun H."/>
            <person name="Tallon L.J."/>
            <person name="Tambunga G."/>
            <person name="Toriumi M.J."/>
            <person name="Town C.D."/>
            <person name="Utterback T."/>
            <person name="Van Aken S."/>
            <person name="Vaysberg M."/>
            <person name="Vysotskaia V.S."/>
            <person name="Walker M."/>
            <person name="Wu D."/>
            <person name="Yu G."/>
            <person name="Fraser C.M."/>
            <person name="Venter J.C."/>
            <person name="Davis R.W."/>
        </authorList>
    </citation>
    <scope>NUCLEOTIDE SEQUENCE [LARGE SCALE GENOMIC DNA]</scope>
    <source>
        <strain>cv. Columbia</strain>
    </source>
</reference>
<reference key="3">
    <citation type="journal article" date="2017" name="Plant J.">
        <title>Araport11: a complete reannotation of the Arabidopsis thaliana reference genome.</title>
        <authorList>
            <person name="Cheng C.Y."/>
            <person name="Krishnakumar V."/>
            <person name="Chan A.P."/>
            <person name="Thibaud-Nissen F."/>
            <person name="Schobel S."/>
            <person name="Town C.D."/>
        </authorList>
    </citation>
    <scope>GENOME REANNOTATION</scope>
    <source>
        <strain>cv. Columbia</strain>
    </source>
</reference>
<reference key="4">
    <citation type="journal article" date="2003" name="Science">
        <title>Empirical analysis of transcriptional activity in the Arabidopsis genome.</title>
        <authorList>
            <person name="Yamada K."/>
            <person name="Lim J."/>
            <person name="Dale J.M."/>
            <person name="Chen H."/>
            <person name="Shinn P."/>
            <person name="Palm C.J."/>
            <person name="Southwick A.M."/>
            <person name="Wu H.C."/>
            <person name="Kim C.J."/>
            <person name="Nguyen M."/>
            <person name="Pham P.K."/>
            <person name="Cheuk R.F."/>
            <person name="Karlin-Newmann G."/>
            <person name="Liu S.X."/>
            <person name="Lam B."/>
            <person name="Sakano H."/>
            <person name="Wu T."/>
            <person name="Yu G."/>
            <person name="Miranda M."/>
            <person name="Quach H.L."/>
            <person name="Tripp M."/>
            <person name="Chang C.H."/>
            <person name="Lee J.M."/>
            <person name="Toriumi M.J."/>
            <person name="Chan M.M."/>
            <person name="Tang C.C."/>
            <person name="Onodera C.S."/>
            <person name="Deng J.M."/>
            <person name="Akiyama K."/>
            <person name="Ansari Y."/>
            <person name="Arakawa T."/>
            <person name="Banh J."/>
            <person name="Banno F."/>
            <person name="Bowser L."/>
            <person name="Brooks S.Y."/>
            <person name="Carninci P."/>
            <person name="Chao Q."/>
            <person name="Choy N."/>
            <person name="Enju A."/>
            <person name="Goldsmith A.D."/>
            <person name="Gurjal M."/>
            <person name="Hansen N.F."/>
            <person name="Hayashizaki Y."/>
            <person name="Johnson-Hopson C."/>
            <person name="Hsuan V.W."/>
            <person name="Iida K."/>
            <person name="Karnes M."/>
            <person name="Khan S."/>
            <person name="Koesema E."/>
            <person name="Ishida J."/>
            <person name="Jiang P.X."/>
            <person name="Jones T."/>
            <person name="Kawai J."/>
            <person name="Kamiya A."/>
            <person name="Meyers C."/>
            <person name="Nakajima M."/>
            <person name="Narusaka M."/>
            <person name="Seki M."/>
            <person name="Sakurai T."/>
            <person name="Satou M."/>
            <person name="Tamse R."/>
            <person name="Vaysberg M."/>
            <person name="Wallender E.K."/>
            <person name="Wong C."/>
            <person name="Yamamura Y."/>
            <person name="Yuan S."/>
            <person name="Shinozaki K."/>
            <person name="Davis R.W."/>
            <person name="Theologis A."/>
            <person name="Ecker J.R."/>
        </authorList>
    </citation>
    <scope>NUCLEOTIDE SEQUENCE [LARGE SCALE MRNA] (ISOFORM 1)</scope>
    <source>
        <strain>cv. Columbia</strain>
    </source>
</reference>
<reference key="5">
    <citation type="journal article" date="2009" name="DNA Res.">
        <title>Analysis of multiple occurrences of alternative splicing events in Arabidopsis thaliana using novel sequenced full-length cDNAs.</title>
        <authorList>
            <person name="Iida K."/>
            <person name="Fukami-Kobayashi K."/>
            <person name="Toyoda A."/>
            <person name="Sakaki Y."/>
            <person name="Kobayashi M."/>
            <person name="Seki M."/>
            <person name="Shinozaki K."/>
        </authorList>
    </citation>
    <scope>NUCLEOTIDE SEQUENCE [LARGE SCALE MRNA] (ISOFORM 2)</scope>
    <source>
        <strain>cv. Columbia</strain>
    </source>
</reference>
<reference key="6">
    <citation type="journal article" date="2004" name="Curr. Biol.">
        <title>The nuclear dsRNA binding protein HYL1 is required for microRNA accumulation and plant development, but not posttranscriptional transgene silencing.</title>
        <authorList>
            <person name="Vazquez F."/>
            <person name="Gasciolli V."/>
            <person name="Crete P."/>
            <person name="Vaucheret H."/>
        </authorList>
    </citation>
    <scope>FUNCTION</scope>
    <scope>DISRUPTION PHENOTYPE</scope>
</reference>
<reference key="7">
    <citation type="journal article" date="2004" name="Proc. Natl. Acad. Sci. U.S.A.">
        <title>The Arabidopsis double-stranded RNA-binding protein HYL1 plays a role in microRNA-mediated gene regulation.</title>
        <authorList>
            <person name="Han M.H."/>
            <person name="Goud S."/>
            <person name="Song L."/>
            <person name="Fedoroff N."/>
        </authorList>
    </citation>
    <scope>FUNCTION</scope>
    <scope>SUBCELLULAR LOCATION</scope>
</reference>
<reference key="8">
    <citation type="journal article" date="2005" name="Plant Mol. Biol.">
        <title>Specific interactions between Dicer-like proteins and HYL1/DRB-family dsRNA-binding proteins in Arabidopsis thaliana.</title>
        <authorList>
            <person name="Hiraguri A."/>
            <person name="Itoh R."/>
            <person name="Kondo N."/>
            <person name="Nomura Y."/>
            <person name="Aizawa D."/>
            <person name="Murai Y."/>
            <person name="Koiwa H."/>
            <person name="Seki M."/>
            <person name="Shinozaki K."/>
            <person name="Fukuhara T."/>
        </authorList>
    </citation>
    <scope>FUNCTION</scope>
    <scope>SUBUNIT</scope>
    <scope>INTERACTION WITH DCL1; DRB2; DRB4 AND DRB5</scope>
</reference>
<reference key="9">
    <citation type="journal article" date="2006" name="Plant J.">
        <title>SERRATE is a novel nuclear regulator in primary microRNA processing in Arabidopsis.</title>
        <authorList>
            <person name="Yang L."/>
            <person name="Liu Z."/>
            <person name="Lu F."/>
            <person name="Dong A."/>
            <person name="Huang H."/>
        </authorList>
    </citation>
    <scope>FUNCTION</scope>
    <scope>INTERACTION WITH SE</scope>
    <scope>TISSUE SPECIFICITY</scope>
    <scope>DISRUPTION PHENOTYPE</scope>
</reference>
<reference key="10">
    <citation type="journal article" date="2006" name="RNA">
        <title>The interaction between DCL1 and HYL1 is important for efficient and precise processing of pri-miRNA in plant microRNA biogenesis.</title>
        <authorList>
            <person name="Kurihara Y."/>
            <person name="Takashi Y."/>
            <person name="Watanabe Y."/>
        </authorList>
    </citation>
    <scope>FUNCTION</scope>
    <scope>INTERACTION WITH DCL1</scope>
</reference>
<reference key="11">
    <citation type="journal article" date="2007" name="Plant Cell">
        <title>The N-terminal double-stranded RNA binding domains of Arabidopsis HYPONASTIC LEAVES1 are sufficient for pre-microRNA processing.</title>
        <authorList>
            <person name="Wu F."/>
            <person name="Yu L."/>
            <person name="Cao W."/>
            <person name="Mao Y."/>
            <person name="Liu Z."/>
            <person name="He Y."/>
        </authorList>
    </citation>
    <scope>FUNCTION</scope>
    <scope>SUBCELLULAR LOCATION</scope>
    <scope>DOMAIN DSRNA-BINDING</scope>
</reference>
<reference key="12">
    <citation type="journal article" date="2007" name="Curr. Biol.">
        <title>Identification of nuclear dicing bodies containing proteins for microRNA biogenesis in living Arabidopsis plants.</title>
        <authorList>
            <person name="Fang Y."/>
            <person name="Spector D.L."/>
        </authorList>
    </citation>
    <scope>SUBCELLULAR LOCATION</scope>
</reference>
<reference key="13">
    <citation type="journal article" date="2008" name="Proc. Natl. Acad. Sci. U.S.A.">
        <title>The RNA-binding proteins HYL1 and SE promote accurate in vitro processing of pri-miRNA by DCL1.</title>
        <authorList>
            <person name="Dong Z."/>
            <person name="Han M.-H."/>
            <person name="Fedoroff N."/>
        </authorList>
    </citation>
    <scope>FUNCTION</scope>
</reference>
<reference key="14">
    <citation type="journal article" date="2009" name="Nucleic Acids Res.">
        <title>Gene structures and processing of Arabidopsis thaliana HYL1-dependent pri-miRNAs.</title>
        <authorList>
            <person name="Szarzynska B."/>
            <person name="Sobkowiak L."/>
            <person name="Pant B.D."/>
            <person name="Balazadeh S."/>
            <person name="Scheible W.R."/>
            <person name="Mueller-Roeber B."/>
            <person name="Jarmolowski A."/>
            <person name="Szweykowska-Kulinska Z."/>
        </authorList>
    </citation>
    <scope>FUNCTION</scope>
</reference>
<reference key="15">
    <citation type="journal article" date="2009" name="RNA">
        <title>The Arabidopsis thaliana double-stranded RNA binding protein DRB1 directs guide strand selection from microRNA duplexes.</title>
        <authorList>
            <person name="Eamens A.L."/>
            <person name="Smith N.A."/>
            <person name="Curtin S.J."/>
            <person name="Wang M.B."/>
            <person name="Waterhouse P.M."/>
        </authorList>
    </citation>
    <scope>FUNCTION</scope>
</reference>
<reference key="16">
    <citation type="journal article" date="2015" name="Nucleic Acids Res.">
        <title>The RNA-binding protein HOS5 and serine/arginine-rich proteins RS40 and RS41 participate in miRNA biogenesis in Arabidopsis.</title>
        <authorList>
            <person name="Chen T."/>
            <person name="Cui P."/>
            <person name="Xiong L."/>
        </authorList>
    </citation>
    <scope>INTERACTION WITH RCF3; RS40 AND RS41</scope>
    <scope>SUBCELLULAR LOCATION</scope>
</reference>
<reference key="17">
    <citation type="journal article" date="2010" name="Biochemistry">
        <title>Structure and RNA interactions of the plant MicroRNA processing-associated protein HYL1.</title>
        <authorList>
            <person name="Rasia R.M."/>
            <person name="Mateos J."/>
            <person name="Bologna N.G."/>
            <person name="Burdisso P."/>
            <person name="Imbert L."/>
            <person name="Palatnik J.F."/>
            <person name="Boisbouvier J."/>
        </authorList>
    </citation>
    <scope>STRUCTURE BY NMR OF 1-170</scope>
    <scope>FUNCTION</scope>
    <scope>DOMAIN DSRNA-BINDING</scope>
</reference>
<reference key="18">
    <citation type="journal article" date="2010" name="Structure">
        <title>Structure of Arabidopsis HYPONASTIC LEAVES1 and its molecular implications for miRNA processing.</title>
        <authorList>
            <person name="Yang S.W."/>
            <person name="Chen H.Y."/>
            <person name="Yang J."/>
            <person name="Machida S."/>
            <person name="Chua N.H."/>
            <person name="Yuan Y.A."/>
        </authorList>
    </citation>
    <scope>X-RAY CRYSTALLOGRAPHY (1.70 ANGSTROMS) OF 15-172 IN COMPLEX WITH DSRNA</scope>
    <scope>FUNCTION</scope>
    <scope>SUBUNIT</scope>
    <scope>DOMAIN DSRNA-BINDING</scope>
</reference>
<comment type="function">
    <text evidence="2 3 4 5 6 7 8 10 11 12 13 14">Double-stranded RNA-binding protein involved in RNA-mediated post-transcriptional gene silencing (PTGS). Functions in the microRNAs (miRNAs) biogenesis by assisting DICER-LIKE 1 (DCL1) in the accurate processing from primary miRNAs (pri-miRNAs) to miRNAs in the nucleus. Forms a complex with SERRATE (SE) and DCL1 to promote accurate processing of pri-miRNAs by DCL1. Binds and assist DCL1 for accurate processing of precursor miRNAs (pre-miRNA). Indirectly involved in the production of trans-acting small interfering RNAs (ta-siRNAs) derived from the TAS1, TAS2 or TAS3 endogenous transcripts by participating in the production of their initiating miRNAs. Involved with argonaute 1 (AGO1) in the guide strand selection from miRNA duplexes, presumably by directional loading of the miRNA duplex (guide stand and passenger strand) onto the RNA-induced silencing complex (RISC) for passenger strand degradation. Does not participate in sense transgene-induced post-transcriptional gene silencing (S-PTGS). Involved in several plant development aspects and response to hormones through its role in miRNAs processing.</text>
</comment>
<comment type="subunit">
    <text evidence="5 6 7 13 15">Homodimer. Heterodimer with DRB2, DRB4 or DRB5. Interacts with SE and DCL1 (PubMed:15821876, PubMed:16428603, PubMed:16889646, PubMed:20462493). Interacts with RCF3, RS40 and RS41 (PubMed:26227967).</text>
</comment>
<comment type="interaction">
    <interactant intactId="EBI-632620">
        <id>O04492</id>
    </interactant>
    <interactant intactId="EBI-2464030">
        <id>Q3EBC8</id>
        <label>At3g03300</label>
    </interactant>
    <organismsDiffer>false</organismsDiffer>
    <experiments>2</experiments>
</comment>
<comment type="interaction">
    <interactant intactId="EBI-632620">
        <id>O04492</id>
    </interactant>
    <interactant intactId="EBI-4429615">
        <id>Q9M2H8</id>
        <label>At3g58380</label>
    </interactant>
    <organismsDiffer>false</organismsDiffer>
    <experiments>3</experiments>
</comment>
<comment type="interaction">
    <interactant intactId="EBI-632620">
        <id>O04492</id>
    </interactant>
    <interactant intactId="EBI-25521002">
        <id>A0A178UTG1</id>
        <label>AXX17_At4g22700</label>
    </interactant>
    <organismsDiffer>false</organismsDiffer>
    <experiments>3</experiments>
</comment>
<comment type="interaction">
    <interactant intactId="EBI-632620">
        <id>O04492</id>
    </interactant>
    <interactant intactId="EBI-632627">
        <id>Q9SP32</id>
        <label>DCL1</label>
    </interactant>
    <organismsDiffer>false</organismsDiffer>
    <experiments>3</experiments>
</comment>
<comment type="interaction">
    <interactant intactId="EBI-632620">
        <id>O04492</id>
    </interactant>
    <interactant intactId="EBI-632620">
        <id>O04492</id>
        <label>DRB1</label>
    </interactant>
    <organismsDiffer>false</organismsDiffer>
    <experiments>5</experiments>
</comment>
<comment type="interaction">
    <interactant intactId="EBI-632620">
        <id>O04492</id>
    </interactant>
    <interactant intactId="EBI-632672">
        <id>Q8GY79</id>
        <label>DRB5</label>
    </interactant>
    <organismsDiffer>false</organismsDiffer>
    <experiments>7</experiments>
</comment>
<comment type="interaction">
    <interactant intactId="EBI-632620">
        <id>O04492</id>
    </interactant>
    <interactant intactId="EBI-20796120">
        <id>Q9LPT6</id>
        <label>OTU2</label>
    </interactant>
    <organismsDiffer>false</organismsDiffer>
    <experiments>3</experiments>
</comment>
<comment type="interaction">
    <interactant intactId="EBI-632620">
        <id>O04492</id>
    </interactant>
    <interactant intactId="EBI-25520978">
        <id>Q9LJ97</id>
        <label>RAB28</label>
    </interactant>
    <organismsDiffer>false</organismsDiffer>
    <experiments>3</experiments>
</comment>
<comment type="interaction">
    <interactant intactId="EBI-632620">
        <id>O04492</id>
    </interactant>
    <interactant intactId="EBI-6553299">
        <id>Q9ZVD0</id>
        <label>SE</label>
    </interactant>
    <organismsDiffer>false</organismsDiffer>
    <experiments>7</experiments>
</comment>
<comment type="subcellular location">
    <subcellularLocation>
        <location evidence="3 8 9">Nucleus</location>
    </subcellularLocation>
    <subcellularLocation>
        <location evidence="15">Nucleus speckle</location>
    </subcellularLocation>
    <text>Localizes to nuclear dicing body (also named D body), a nuclear body distributed throughout the nucleoplasm and involved in miRNA processing.</text>
</comment>
<comment type="alternative products">
    <event type="alternative splicing"/>
    <isoform>
        <id>O04492-1</id>
        <name>1</name>
        <sequence type="displayed"/>
    </isoform>
    <isoform>
        <id>O04492-2</id>
        <name>2</name>
        <sequence type="described" ref="VSP_040613"/>
    </isoform>
</comment>
<comment type="tissue specificity">
    <text evidence="2 7">Expressed in rosette and cauline leaves, stems, roots, flowers and siliques.</text>
</comment>
<comment type="induction">
    <text evidence="2">By abscisic acid (ABA).</text>
</comment>
<comment type="domain">
    <text evidence="8 13 14">The dsRNA binding domains (dsRBDs) 1 and 2 are sufficient for the function in miRNA precursors processing and mature miRNA generation.</text>
</comment>
<comment type="disruption phenotype">
    <text evidence="2 4 7">Short plant, delayed flowering, leaf hyponasty, reduced fertility, decreased rate of root growth, altered root gravitropic response, decreased sensitivity to auxin and cytokinin and hypersensitivity to abscisic acid (ABA). Reduction of several miRNA accumulation.</text>
</comment>
<comment type="miscellaneous">
    <text>Plants overexpressing HYL1 show decreased stability of transcripts targeted by miRNAs.</text>
</comment>
<organism>
    <name type="scientific">Arabidopsis thaliana</name>
    <name type="common">Mouse-ear cress</name>
    <dbReference type="NCBI Taxonomy" id="3702"/>
    <lineage>
        <taxon>Eukaryota</taxon>
        <taxon>Viridiplantae</taxon>
        <taxon>Streptophyta</taxon>
        <taxon>Embryophyta</taxon>
        <taxon>Tracheophyta</taxon>
        <taxon>Spermatophyta</taxon>
        <taxon>Magnoliopsida</taxon>
        <taxon>eudicotyledons</taxon>
        <taxon>Gunneridae</taxon>
        <taxon>Pentapetalae</taxon>
        <taxon>rosids</taxon>
        <taxon>malvids</taxon>
        <taxon>Brassicales</taxon>
        <taxon>Brassicaceae</taxon>
        <taxon>Camelineae</taxon>
        <taxon>Arabidopsis</taxon>
    </lineage>
</organism>
<gene>
    <name type="primary">DRB1</name>
    <name type="synonym">HYL1</name>
    <name type="ordered locus">At1g09700</name>
    <name type="ORF">F21M12.9</name>
</gene>